<reference key="1">
    <citation type="journal article" date="2002" name="DNA Res.">
        <title>Complete genomic sequence of nitrogen-fixing symbiotic bacterium Bradyrhizobium japonicum USDA110.</title>
        <authorList>
            <person name="Kaneko T."/>
            <person name="Nakamura Y."/>
            <person name="Sato S."/>
            <person name="Minamisawa K."/>
            <person name="Uchiumi T."/>
            <person name="Sasamoto S."/>
            <person name="Watanabe A."/>
            <person name="Idesawa K."/>
            <person name="Iriguchi M."/>
            <person name="Kawashima K."/>
            <person name="Kohara M."/>
            <person name="Matsumoto M."/>
            <person name="Shimpo S."/>
            <person name="Tsuruoka H."/>
            <person name="Wada T."/>
            <person name="Yamada M."/>
            <person name="Tabata S."/>
        </authorList>
    </citation>
    <scope>NUCLEOTIDE SEQUENCE [LARGE SCALE GENOMIC DNA]</scope>
    <source>
        <strain>JCM 10833 / BCRC 13528 / IAM 13628 / NBRC 14792 / USDA 110</strain>
    </source>
</reference>
<feature type="chain" id="PRO_0000402992" description="FMN reductase (NADH) RutF">
    <location>
        <begin position="1"/>
        <end position="180"/>
    </location>
</feature>
<protein>
    <recommendedName>
        <fullName evidence="1">FMN reductase (NADH) RutF</fullName>
        <ecNumber evidence="1">1.5.1.42</ecNumber>
    </recommendedName>
    <alternativeName>
        <fullName evidence="1">FMN reductase</fullName>
    </alternativeName>
    <alternativeName>
        <fullName evidence="1">NADH-flavin reductase RutF</fullName>
    </alternativeName>
    <alternativeName>
        <fullName evidence="1">NADH:flavin oxidoreductase</fullName>
    </alternativeName>
</protein>
<comment type="function">
    <text evidence="1">Catalyzes the reduction of FMN to FMNH2 which is used to reduce pyrimidine by RutA via the Rut pathway.</text>
</comment>
<comment type="catalytic activity">
    <reaction evidence="1">
        <text>FMNH2 + NAD(+) = FMN + NADH + 2 H(+)</text>
        <dbReference type="Rhea" id="RHEA:21620"/>
        <dbReference type="ChEBI" id="CHEBI:15378"/>
        <dbReference type="ChEBI" id="CHEBI:57540"/>
        <dbReference type="ChEBI" id="CHEBI:57618"/>
        <dbReference type="ChEBI" id="CHEBI:57945"/>
        <dbReference type="ChEBI" id="CHEBI:58210"/>
        <dbReference type="EC" id="1.5.1.42"/>
    </reaction>
</comment>
<comment type="similarity">
    <text evidence="1">Belongs to the non-flavoprotein flavin reductase family. RutF subfamily.</text>
</comment>
<proteinExistence type="inferred from homology"/>
<name>RUTF_BRADU</name>
<keyword id="KW-0285">Flavoprotein</keyword>
<keyword id="KW-0288">FMN</keyword>
<keyword id="KW-0520">NAD</keyword>
<keyword id="KW-0560">Oxidoreductase</keyword>
<keyword id="KW-1185">Reference proteome</keyword>
<dbReference type="EC" id="1.5.1.42" evidence="1"/>
<dbReference type="EMBL" id="BA000040">
    <property type="protein sequence ID" value="BAC48589.1"/>
    <property type="molecule type" value="Genomic_DNA"/>
</dbReference>
<dbReference type="RefSeq" id="NP_769964.1">
    <property type="nucleotide sequence ID" value="NC_004463.1"/>
</dbReference>
<dbReference type="SMR" id="Q89Q06"/>
<dbReference type="FunCoup" id="Q89Q06">
    <property type="interactions" value="68"/>
</dbReference>
<dbReference type="STRING" id="224911.AAV28_13650"/>
<dbReference type="EnsemblBacteria" id="BAC48589">
    <property type="protein sequence ID" value="BAC48589"/>
    <property type="gene ID" value="BAC48589"/>
</dbReference>
<dbReference type="KEGG" id="bja:blr3324"/>
<dbReference type="PATRIC" id="fig|224911.5.peg.3323"/>
<dbReference type="eggNOG" id="COG1853">
    <property type="taxonomic scope" value="Bacteria"/>
</dbReference>
<dbReference type="HOGENOM" id="CLU_059021_2_2_5"/>
<dbReference type="InParanoid" id="Q89Q06"/>
<dbReference type="OrthoDB" id="9789254at2"/>
<dbReference type="PhylomeDB" id="Q89Q06"/>
<dbReference type="Proteomes" id="UP000002526">
    <property type="component" value="Chromosome"/>
</dbReference>
<dbReference type="GO" id="GO:0010181">
    <property type="term" value="F:FMN binding"/>
    <property type="evidence" value="ECO:0007669"/>
    <property type="project" value="InterPro"/>
</dbReference>
<dbReference type="GO" id="GO:0052874">
    <property type="term" value="F:FMN reductase (NADH) activity"/>
    <property type="evidence" value="ECO:0007669"/>
    <property type="project" value="UniProtKB-EC"/>
</dbReference>
<dbReference type="GO" id="GO:0008752">
    <property type="term" value="F:FMN reductase [NAD(P)H] activity"/>
    <property type="evidence" value="ECO:0007669"/>
    <property type="project" value="InterPro"/>
</dbReference>
<dbReference type="GO" id="GO:0042602">
    <property type="term" value="F:riboflavin reductase (NADPH) activity"/>
    <property type="evidence" value="ECO:0000318"/>
    <property type="project" value="GO_Central"/>
</dbReference>
<dbReference type="GO" id="GO:0019740">
    <property type="term" value="P:nitrogen utilization"/>
    <property type="evidence" value="ECO:0007669"/>
    <property type="project" value="UniProtKB-UniRule"/>
</dbReference>
<dbReference type="GO" id="GO:0006208">
    <property type="term" value="P:pyrimidine nucleobase catabolic process"/>
    <property type="evidence" value="ECO:0000318"/>
    <property type="project" value="GO_Central"/>
</dbReference>
<dbReference type="GO" id="GO:0006212">
    <property type="term" value="P:uracil catabolic process"/>
    <property type="evidence" value="ECO:0007669"/>
    <property type="project" value="UniProtKB-UniRule"/>
</dbReference>
<dbReference type="FunFam" id="2.30.110.10:FF:000002">
    <property type="entry name" value="FMN reductase (NADH) RutF"/>
    <property type="match status" value="1"/>
</dbReference>
<dbReference type="Gene3D" id="2.30.110.10">
    <property type="entry name" value="Electron Transport, Fmn-binding Protein, Chain A"/>
    <property type="match status" value="1"/>
</dbReference>
<dbReference type="HAMAP" id="MF_00833">
    <property type="entry name" value="RutF"/>
    <property type="match status" value="1"/>
</dbReference>
<dbReference type="InterPro" id="IPR002563">
    <property type="entry name" value="Flavin_Rdtase-like_dom"/>
</dbReference>
<dbReference type="InterPro" id="IPR050268">
    <property type="entry name" value="NADH-dep_flavin_reductase"/>
</dbReference>
<dbReference type="InterPro" id="IPR019917">
    <property type="entry name" value="RutF"/>
</dbReference>
<dbReference type="InterPro" id="IPR012349">
    <property type="entry name" value="Split_barrel_FMN-bd"/>
</dbReference>
<dbReference type="PANTHER" id="PTHR30466">
    <property type="entry name" value="FLAVIN REDUCTASE"/>
    <property type="match status" value="1"/>
</dbReference>
<dbReference type="PANTHER" id="PTHR30466:SF1">
    <property type="entry name" value="FMN REDUCTASE (NADH) RUTF"/>
    <property type="match status" value="1"/>
</dbReference>
<dbReference type="Pfam" id="PF01613">
    <property type="entry name" value="Flavin_Reduct"/>
    <property type="match status" value="1"/>
</dbReference>
<dbReference type="SMART" id="SM00903">
    <property type="entry name" value="Flavin_Reduct"/>
    <property type="match status" value="1"/>
</dbReference>
<dbReference type="SUPFAM" id="SSF50475">
    <property type="entry name" value="FMN-binding split barrel"/>
    <property type="match status" value="1"/>
</dbReference>
<sequence>MRMRMQDVAPQDYRDAMACLGAAVNIVTTDGSAGRAGFTASAICSVTDDPPTLLVCINRGSSAYSSVTRNEVVCVNVLSARHEPLSRLFGGKVPADERFAAAAWSTLATGAPVLADCSAAFDCRIADTVNVGTHDVLFCRVVALQRFGCTDNLIYFGRAYHTVGVTDPAEAGPESALDAS</sequence>
<accession>Q89Q06</accession>
<gene>
    <name evidence="1" type="primary">rutF</name>
    <name type="ordered locus">blr3324</name>
</gene>
<evidence type="ECO:0000255" key="1">
    <source>
        <dbReference type="HAMAP-Rule" id="MF_00833"/>
    </source>
</evidence>
<organism>
    <name type="scientific">Bradyrhizobium diazoefficiens (strain JCM 10833 / BCRC 13528 / IAM 13628 / NBRC 14792 / USDA 110)</name>
    <dbReference type="NCBI Taxonomy" id="224911"/>
    <lineage>
        <taxon>Bacteria</taxon>
        <taxon>Pseudomonadati</taxon>
        <taxon>Pseudomonadota</taxon>
        <taxon>Alphaproteobacteria</taxon>
        <taxon>Hyphomicrobiales</taxon>
        <taxon>Nitrobacteraceae</taxon>
        <taxon>Bradyrhizobium</taxon>
    </lineage>
</organism>